<organism>
    <name type="scientific">Staphylococcus aureus (strain Mu3 / ATCC 700698)</name>
    <dbReference type="NCBI Taxonomy" id="418127"/>
    <lineage>
        <taxon>Bacteria</taxon>
        <taxon>Bacillati</taxon>
        <taxon>Bacillota</taxon>
        <taxon>Bacilli</taxon>
        <taxon>Bacillales</taxon>
        <taxon>Staphylococcaceae</taxon>
        <taxon>Staphylococcus</taxon>
    </lineage>
</organism>
<comment type="function">
    <text evidence="2">One of the essential components for the initiation of protein synthesis. Protects formylmethionyl-tRNA from spontaneous hydrolysis and promotes its binding to the 30S ribosomal subunits. Also involved in the hydrolysis of GTP during the formation of the 70S ribosomal complex.</text>
</comment>
<comment type="subcellular location">
    <subcellularLocation>
        <location evidence="2">Cytoplasm</location>
    </subcellularLocation>
</comment>
<comment type="similarity">
    <text evidence="2">Belongs to the TRAFAC class translation factor GTPase superfamily. Classic translation factor GTPase family. IF-2 subfamily.</text>
</comment>
<feature type="chain" id="PRO_1000008345" description="Translation initiation factor IF-2">
    <location>
        <begin position="1"/>
        <end position="705"/>
    </location>
</feature>
<feature type="domain" description="tr-type G">
    <location>
        <begin position="207"/>
        <end position="376"/>
    </location>
</feature>
<feature type="region of interest" description="Disordered" evidence="3">
    <location>
        <begin position="40"/>
        <end position="124"/>
    </location>
</feature>
<feature type="region of interest" description="G1" evidence="1">
    <location>
        <begin position="216"/>
        <end position="223"/>
    </location>
</feature>
<feature type="region of interest" description="G2" evidence="1">
    <location>
        <begin position="241"/>
        <end position="245"/>
    </location>
</feature>
<feature type="region of interest" description="G3" evidence="1">
    <location>
        <begin position="262"/>
        <end position="265"/>
    </location>
</feature>
<feature type="region of interest" description="G4" evidence="1">
    <location>
        <begin position="316"/>
        <end position="319"/>
    </location>
</feature>
<feature type="region of interest" description="G5" evidence="1">
    <location>
        <begin position="352"/>
        <end position="354"/>
    </location>
</feature>
<feature type="compositionally biased region" description="Basic and acidic residues" evidence="3">
    <location>
        <begin position="41"/>
        <end position="58"/>
    </location>
</feature>
<feature type="compositionally biased region" description="Low complexity" evidence="3">
    <location>
        <begin position="59"/>
        <end position="77"/>
    </location>
</feature>
<feature type="compositionally biased region" description="Basic residues" evidence="3">
    <location>
        <begin position="94"/>
        <end position="108"/>
    </location>
</feature>
<feature type="binding site" evidence="2">
    <location>
        <begin position="216"/>
        <end position="223"/>
    </location>
    <ligand>
        <name>GTP</name>
        <dbReference type="ChEBI" id="CHEBI:37565"/>
    </ligand>
</feature>
<feature type="binding site" evidence="2">
    <location>
        <begin position="262"/>
        <end position="266"/>
    </location>
    <ligand>
        <name>GTP</name>
        <dbReference type="ChEBI" id="CHEBI:37565"/>
    </ligand>
</feature>
<feature type="binding site" evidence="2">
    <location>
        <begin position="316"/>
        <end position="319"/>
    </location>
    <ligand>
        <name>GTP</name>
        <dbReference type="ChEBI" id="CHEBI:37565"/>
    </ligand>
</feature>
<evidence type="ECO:0000250" key="1"/>
<evidence type="ECO:0000255" key="2">
    <source>
        <dbReference type="HAMAP-Rule" id="MF_00100"/>
    </source>
</evidence>
<evidence type="ECO:0000256" key="3">
    <source>
        <dbReference type="SAM" id="MobiDB-lite"/>
    </source>
</evidence>
<gene>
    <name evidence="2" type="primary">infB</name>
    <name type="ordered locus">SAHV_1259</name>
</gene>
<accession>A7X1Q1</accession>
<dbReference type="EMBL" id="AP009324">
    <property type="protein sequence ID" value="BAF78142.1"/>
    <property type="molecule type" value="Genomic_DNA"/>
</dbReference>
<dbReference type="RefSeq" id="WP_000043635.1">
    <property type="nucleotide sequence ID" value="NC_009782.1"/>
</dbReference>
<dbReference type="SMR" id="A7X1Q1"/>
<dbReference type="KEGG" id="saw:SAHV_1259"/>
<dbReference type="HOGENOM" id="CLU_006301_5_1_9"/>
<dbReference type="GO" id="GO:0005829">
    <property type="term" value="C:cytosol"/>
    <property type="evidence" value="ECO:0007669"/>
    <property type="project" value="TreeGrafter"/>
</dbReference>
<dbReference type="GO" id="GO:0005525">
    <property type="term" value="F:GTP binding"/>
    <property type="evidence" value="ECO:0007669"/>
    <property type="project" value="UniProtKB-KW"/>
</dbReference>
<dbReference type="GO" id="GO:0003924">
    <property type="term" value="F:GTPase activity"/>
    <property type="evidence" value="ECO:0007669"/>
    <property type="project" value="UniProtKB-UniRule"/>
</dbReference>
<dbReference type="GO" id="GO:0003743">
    <property type="term" value="F:translation initiation factor activity"/>
    <property type="evidence" value="ECO:0007669"/>
    <property type="project" value="UniProtKB-UniRule"/>
</dbReference>
<dbReference type="CDD" id="cd01887">
    <property type="entry name" value="IF2_eIF5B"/>
    <property type="match status" value="1"/>
</dbReference>
<dbReference type="CDD" id="cd03702">
    <property type="entry name" value="IF2_mtIF2_II"/>
    <property type="match status" value="1"/>
</dbReference>
<dbReference type="CDD" id="cd03692">
    <property type="entry name" value="mtIF2_IVc"/>
    <property type="match status" value="1"/>
</dbReference>
<dbReference type="FunFam" id="1.10.10.2480:FF:000002">
    <property type="entry name" value="Translation initiation factor IF-2"/>
    <property type="match status" value="1"/>
</dbReference>
<dbReference type="FunFam" id="2.40.30.10:FF:000007">
    <property type="entry name" value="Translation initiation factor IF-2"/>
    <property type="match status" value="1"/>
</dbReference>
<dbReference type="FunFam" id="2.40.30.10:FF:000008">
    <property type="entry name" value="Translation initiation factor IF-2"/>
    <property type="match status" value="1"/>
</dbReference>
<dbReference type="FunFam" id="3.40.50.10050:FF:000001">
    <property type="entry name" value="Translation initiation factor IF-2"/>
    <property type="match status" value="1"/>
</dbReference>
<dbReference type="FunFam" id="3.40.50.300:FF:000019">
    <property type="entry name" value="Translation initiation factor IF-2"/>
    <property type="match status" value="1"/>
</dbReference>
<dbReference type="Gene3D" id="1.10.10.2480">
    <property type="match status" value="1"/>
</dbReference>
<dbReference type="Gene3D" id="3.40.50.300">
    <property type="entry name" value="P-loop containing nucleotide triphosphate hydrolases"/>
    <property type="match status" value="1"/>
</dbReference>
<dbReference type="Gene3D" id="2.40.30.10">
    <property type="entry name" value="Translation factors"/>
    <property type="match status" value="2"/>
</dbReference>
<dbReference type="Gene3D" id="3.40.50.10050">
    <property type="entry name" value="Translation initiation factor IF- 2, domain 3"/>
    <property type="match status" value="1"/>
</dbReference>
<dbReference type="HAMAP" id="MF_00100_B">
    <property type="entry name" value="IF_2_B"/>
    <property type="match status" value="1"/>
</dbReference>
<dbReference type="InterPro" id="IPR053905">
    <property type="entry name" value="EF-G-like_DII"/>
</dbReference>
<dbReference type="InterPro" id="IPR044145">
    <property type="entry name" value="IF2_II"/>
</dbReference>
<dbReference type="InterPro" id="IPR006847">
    <property type="entry name" value="IF2_N"/>
</dbReference>
<dbReference type="InterPro" id="IPR027417">
    <property type="entry name" value="P-loop_NTPase"/>
</dbReference>
<dbReference type="InterPro" id="IPR005225">
    <property type="entry name" value="Small_GTP-bd"/>
</dbReference>
<dbReference type="InterPro" id="IPR000795">
    <property type="entry name" value="T_Tr_GTP-bd_dom"/>
</dbReference>
<dbReference type="InterPro" id="IPR000178">
    <property type="entry name" value="TF_IF2_bacterial-like"/>
</dbReference>
<dbReference type="InterPro" id="IPR015760">
    <property type="entry name" value="TIF_IF2"/>
</dbReference>
<dbReference type="InterPro" id="IPR023115">
    <property type="entry name" value="TIF_IF2_dom3"/>
</dbReference>
<dbReference type="InterPro" id="IPR036925">
    <property type="entry name" value="TIF_IF2_dom3_sf"/>
</dbReference>
<dbReference type="InterPro" id="IPR009000">
    <property type="entry name" value="Transl_B-barrel_sf"/>
</dbReference>
<dbReference type="NCBIfam" id="TIGR00487">
    <property type="entry name" value="IF-2"/>
    <property type="match status" value="1"/>
</dbReference>
<dbReference type="NCBIfam" id="TIGR00231">
    <property type="entry name" value="small_GTP"/>
    <property type="match status" value="1"/>
</dbReference>
<dbReference type="PANTHER" id="PTHR43381:SF5">
    <property type="entry name" value="TR-TYPE G DOMAIN-CONTAINING PROTEIN"/>
    <property type="match status" value="1"/>
</dbReference>
<dbReference type="PANTHER" id="PTHR43381">
    <property type="entry name" value="TRANSLATION INITIATION FACTOR IF-2-RELATED"/>
    <property type="match status" value="1"/>
</dbReference>
<dbReference type="Pfam" id="PF22042">
    <property type="entry name" value="EF-G_D2"/>
    <property type="match status" value="1"/>
</dbReference>
<dbReference type="Pfam" id="PF00009">
    <property type="entry name" value="GTP_EFTU"/>
    <property type="match status" value="1"/>
</dbReference>
<dbReference type="Pfam" id="PF11987">
    <property type="entry name" value="IF-2"/>
    <property type="match status" value="1"/>
</dbReference>
<dbReference type="Pfam" id="PF04760">
    <property type="entry name" value="IF2_N"/>
    <property type="match status" value="2"/>
</dbReference>
<dbReference type="SUPFAM" id="SSF52156">
    <property type="entry name" value="Initiation factor IF2/eIF5b, domain 3"/>
    <property type="match status" value="1"/>
</dbReference>
<dbReference type="SUPFAM" id="SSF52540">
    <property type="entry name" value="P-loop containing nucleoside triphosphate hydrolases"/>
    <property type="match status" value="1"/>
</dbReference>
<dbReference type="SUPFAM" id="SSF50447">
    <property type="entry name" value="Translation proteins"/>
    <property type="match status" value="2"/>
</dbReference>
<dbReference type="PROSITE" id="PS51722">
    <property type="entry name" value="G_TR_2"/>
    <property type="match status" value="1"/>
</dbReference>
<dbReference type="PROSITE" id="PS01176">
    <property type="entry name" value="IF2"/>
    <property type="match status" value="1"/>
</dbReference>
<keyword id="KW-0963">Cytoplasm</keyword>
<keyword id="KW-0342">GTP-binding</keyword>
<keyword id="KW-0396">Initiation factor</keyword>
<keyword id="KW-0547">Nucleotide-binding</keyword>
<keyword id="KW-0648">Protein biosynthesis</keyword>
<reference key="1">
    <citation type="journal article" date="2008" name="Antimicrob. Agents Chemother.">
        <title>Mutated response regulator graR is responsible for phenotypic conversion of Staphylococcus aureus from heterogeneous vancomycin-intermediate resistance to vancomycin-intermediate resistance.</title>
        <authorList>
            <person name="Neoh H.-M."/>
            <person name="Cui L."/>
            <person name="Yuzawa H."/>
            <person name="Takeuchi F."/>
            <person name="Matsuo M."/>
            <person name="Hiramatsu K."/>
        </authorList>
    </citation>
    <scope>NUCLEOTIDE SEQUENCE [LARGE SCALE GENOMIC DNA]</scope>
    <source>
        <strain>Mu3 / ATCC 700698</strain>
    </source>
</reference>
<proteinExistence type="inferred from homology"/>
<name>IF2_STAA1</name>
<sequence>MSKQRIYEYAKELNLKSKEIIDELKSMNIEVSNHMQALEDDQIKALDKKFKKEQKNDNKQSTQNNHQKSNNQNQNKGQQKDNKKNQQQNNKGNKGNKKNNRNNKKNNKNNKPQNQPAAPKEIPSKVTYQEGITVGEFADKLNVESSEIIKKLFLLGIVANINQSLNQETIELIADDYGVEVEEEVVINEEDLSIYFEDEKDDPEAIERPAVVTIMGHVDHGKTTLLDSIRHTKVTAGEAGGITQHIGAYQIENDGKKITFLDTPGHAAFTTMRARGAQVTDITILVVAADDGVMPQTIEAINHAKEAEVPIIVAVNKIDKPTSNPDRVMQELTEYGLIPEDWGGETIFVPLSALSGDGIDDLLEMIGLVAEVQELKANPKNRAVGTVIEAELDKSRGPSASLLVQNGTLNVGDAIVVGNTYGRIRAMVNDLGQRIKTAGPSTPVEITGINDVPQAGDRFVVFSDEKQARRIGESRHEASIVQQRQESKNVSLDNLFEQMKQGEMKDLNVIIKGDVQGSVEALAASLMKIDVEGVNVRIIHTAVGAINESDVTLANASNGIIIGFNVRPDSGAKRAAEAENVDMRLHRVIYNVIEEIESAMKGLLDPEFEEQVIGQAEVRQTFKVSKVGTIAGCYVTEGKITRNAGVRIIRDGIVQYEGELDTLKRFKDDAKEVAKGYECGITIENYNDLKEGDVIEAFEMVEIKR</sequence>
<protein>
    <recommendedName>
        <fullName evidence="2">Translation initiation factor IF-2</fullName>
    </recommendedName>
</protein>